<name>RL27_PEDPA</name>
<proteinExistence type="inferred from homology"/>
<reference key="1">
    <citation type="journal article" date="2006" name="Proc. Natl. Acad. Sci. U.S.A.">
        <title>Comparative genomics of the lactic acid bacteria.</title>
        <authorList>
            <person name="Makarova K.S."/>
            <person name="Slesarev A."/>
            <person name="Wolf Y.I."/>
            <person name="Sorokin A."/>
            <person name="Mirkin B."/>
            <person name="Koonin E.V."/>
            <person name="Pavlov A."/>
            <person name="Pavlova N."/>
            <person name="Karamychev V."/>
            <person name="Polouchine N."/>
            <person name="Shakhova V."/>
            <person name="Grigoriev I."/>
            <person name="Lou Y."/>
            <person name="Rohksar D."/>
            <person name="Lucas S."/>
            <person name="Huang K."/>
            <person name="Goodstein D.M."/>
            <person name="Hawkins T."/>
            <person name="Plengvidhya V."/>
            <person name="Welker D."/>
            <person name="Hughes J."/>
            <person name="Goh Y."/>
            <person name="Benson A."/>
            <person name="Baldwin K."/>
            <person name="Lee J.-H."/>
            <person name="Diaz-Muniz I."/>
            <person name="Dosti B."/>
            <person name="Smeianov V."/>
            <person name="Wechter W."/>
            <person name="Barabote R."/>
            <person name="Lorca G."/>
            <person name="Altermann E."/>
            <person name="Barrangou R."/>
            <person name="Ganesan B."/>
            <person name="Xie Y."/>
            <person name="Rawsthorne H."/>
            <person name="Tamir D."/>
            <person name="Parker C."/>
            <person name="Breidt F."/>
            <person name="Broadbent J.R."/>
            <person name="Hutkins R."/>
            <person name="O'Sullivan D."/>
            <person name="Steele J."/>
            <person name="Unlu G."/>
            <person name="Saier M.H. Jr."/>
            <person name="Klaenhammer T."/>
            <person name="Richardson P."/>
            <person name="Kozyavkin S."/>
            <person name="Weimer B.C."/>
            <person name="Mills D.A."/>
        </authorList>
    </citation>
    <scope>NUCLEOTIDE SEQUENCE [LARGE SCALE GENOMIC DNA]</scope>
    <source>
        <strain>ATCC 25745 / CCUG 21536 / LMG 10740 / 183-1w</strain>
    </source>
</reference>
<organism>
    <name type="scientific">Pediococcus pentosaceus (strain ATCC 25745 / CCUG 21536 / LMG 10740 / 183-1w)</name>
    <dbReference type="NCBI Taxonomy" id="278197"/>
    <lineage>
        <taxon>Bacteria</taxon>
        <taxon>Bacillati</taxon>
        <taxon>Bacillota</taxon>
        <taxon>Bacilli</taxon>
        <taxon>Lactobacillales</taxon>
        <taxon>Lactobacillaceae</taxon>
        <taxon>Pediococcus</taxon>
    </lineage>
</organism>
<accession>Q03FZ9</accession>
<gene>
    <name evidence="2" type="primary">rpmA</name>
    <name type="ordered locus">PEPE_0813</name>
</gene>
<keyword id="KW-0687">Ribonucleoprotein</keyword>
<keyword id="KW-0689">Ribosomal protein</keyword>
<protein>
    <recommendedName>
        <fullName evidence="2">Large ribosomal subunit protein bL27</fullName>
    </recommendedName>
    <alternativeName>
        <fullName evidence="4">50S ribosomal protein L27</fullName>
    </alternativeName>
</protein>
<sequence length="95" mass="10381">MEMNLQFFSHHKGGGSTSNGRDSAGRRLGTKRADGQAAKAGMIIYRQRGTHIYPGVNVGRGNDDTLFALADGVVRFERKGRDKRQVSVYPVADAE</sequence>
<dbReference type="EMBL" id="CP000422">
    <property type="protein sequence ID" value="ABJ67873.1"/>
    <property type="molecule type" value="Genomic_DNA"/>
</dbReference>
<dbReference type="RefSeq" id="WP_002833541.1">
    <property type="nucleotide sequence ID" value="NC_008525.1"/>
</dbReference>
<dbReference type="SMR" id="Q03FZ9"/>
<dbReference type="STRING" id="278197.PEPE_0813"/>
<dbReference type="GeneID" id="33061448"/>
<dbReference type="KEGG" id="ppe:PEPE_0813"/>
<dbReference type="eggNOG" id="COG0211">
    <property type="taxonomic scope" value="Bacteria"/>
</dbReference>
<dbReference type="HOGENOM" id="CLU_095424_4_0_9"/>
<dbReference type="OrthoDB" id="9803474at2"/>
<dbReference type="Proteomes" id="UP000000773">
    <property type="component" value="Chromosome"/>
</dbReference>
<dbReference type="GO" id="GO:0022625">
    <property type="term" value="C:cytosolic large ribosomal subunit"/>
    <property type="evidence" value="ECO:0007669"/>
    <property type="project" value="TreeGrafter"/>
</dbReference>
<dbReference type="GO" id="GO:0003735">
    <property type="term" value="F:structural constituent of ribosome"/>
    <property type="evidence" value="ECO:0007669"/>
    <property type="project" value="InterPro"/>
</dbReference>
<dbReference type="GO" id="GO:0006412">
    <property type="term" value="P:translation"/>
    <property type="evidence" value="ECO:0007669"/>
    <property type="project" value="UniProtKB-UniRule"/>
</dbReference>
<dbReference type="FunFam" id="2.40.50.100:FF:000004">
    <property type="entry name" value="50S ribosomal protein L27"/>
    <property type="match status" value="1"/>
</dbReference>
<dbReference type="Gene3D" id="2.40.50.100">
    <property type="match status" value="1"/>
</dbReference>
<dbReference type="HAMAP" id="MF_00539">
    <property type="entry name" value="Ribosomal_bL27"/>
    <property type="match status" value="1"/>
</dbReference>
<dbReference type="InterPro" id="IPR001684">
    <property type="entry name" value="Ribosomal_bL27"/>
</dbReference>
<dbReference type="InterPro" id="IPR018261">
    <property type="entry name" value="Ribosomal_bL27_CS"/>
</dbReference>
<dbReference type="NCBIfam" id="TIGR00062">
    <property type="entry name" value="L27"/>
    <property type="match status" value="1"/>
</dbReference>
<dbReference type="PANTHER" id="PTHR15893:SF0">
    <property type="entry name" value="LARGE RIBOSOMAL SUBUNIT PROTEIN BL27M"/>
    <property type="match status" value="1"/>
</dbReference>
<dbReference type="PANTHER" id="PTHR15893">
    <property type="entry name" value="RIBOSOMAL PROTEIN L27"/>
    <property type="match status" value="1"/>
</dbReference>
<dbReference type="Pfam" id="PF01016">
    <property type="entry name" value="Ribosomal_L27"/>
    <property type="match status" value="1"/>
</dbReference>
<dbReference type="PRINTS" id="PR00063">
    <property type="entry name" value="RIBOSOMALL27"/>
</dbReference>
<dbReference type="SUPFAM" id="SSF110324">
    <property type="entry name" value="Ribosomal L27 protein-like"/>
    <property type="match status" value="1"/>
</dbReference>
<dbReference type="PROSITE" id="PS00831">
    <property type="entry name" value="RIBOSOMAL_L27"/>
    <property type="match status" value="1"/>
</dbReference>
<evidence type="ECO:0000250" key="1">
    <source>
        <dbReference type="UniProtKB" id="Q2FXT0"/>
    </source>
</evidence>
<evidence type="ECO:0000255" key="2">
    <source>
        <dbReference type="HAMAP-Rule" id="MF_00539"/>
    </source>
</evidence>
<evidence type="ECO:0000256" key="3">
    <source>
        <dbReference type="SAM" id="MobiDB-lite"/>
    </source>
</evidence>
<evidence type="ECO:0000305" key="4"/>
<comment type="PTM">
    <text evidence="1">The N-terminus is cleaved by ribosomal processing cysteine protease Prp.</text>
</comment>
<comment type="similarity">
    <text evidence="2">Belongs to the bacterial ribosomal protein bL27 family.</text>
</comment>
<feature type="propeptide" id="PRO_0000459924" evidence="1">
    <location>
        <begin position="1"/>
        <end position="8"/>
    </location>
</feature>
<feature type="chain" id="PRO_1000017541" description="Large ribosomal subunit protein bL27">
    <location>
        <begin position="9"/>
        <end position="95"/>
    </location>
</feature>
<feature type="region of interest" description="Disordered" evidence="3">
    <location>
        <begin position="1"/>
        <end position="34"/>
    </location>
</feature>